<evidence type="ECO:0000250" key="1">
    <source>
        <dbReference type="UniProtKB" id="Q70YC5"/>
    </source>
</evidence>
<evidence type="ECO:0000250" key="2">
    <source>
        <dbReference type="UniProtKB" id="Q8BG89"/>
    </source>
</evidence>
<evidence type="ECO:0000255" key="3"/>
<evidence type="ECO:0000255" key="4">
    <source>
        <dbReference type="PROSITE-ProRule" id="PRU00042"/>
    </source>
</evidence>
<evidence type="ECO:0000269" key="5">
    <source>
    </source>
</evidence>
<evidence type="ECO:0000269" key="6">
    <source>
    </source>
</evidence>
<evidence type="ECO:0000303" key="7">
    <source>
    </source>
</evidence>
<evidence type="ECO:0007744" key="8">
    <source>
    </source>
</evidence>
<dbReference type="EMBL" id="BC087056">
    <property type="protein sequence ID" value="AAH87056.1"/>
    <property type="molecule type" value="mRNA"/>
</dbReference>
<dbReference type="RefSeq" id="NP_001020316.1">
    <property type="nucleotide sequence ID" value="NM_001025145.1"/>
</dbReference>
<dbReference type="SMR" id="Q5PQS2"/>
<dbReference type="FunCoup" id="Q5PQS2">
    <property type="interactions" value="1392"/>
</dbReference>
<dbReference type="STRING" id="10116.ENSRNOP00000054802"/>
<dbReference type="iPTMnet" id="Q5PQS2"/>
<dbReference type="PhosphoSitePlus" id="Q5PQS2"/>
<dbReference type="PaxDb" id="10116-ENSRNOP00000054802"/>
<dbReference type="GeneID" id="499425"/>
<dbReference type="KEGG" id="rno:499425"/>
<dbReference type="UCSC" id="RGD:1565986">
    <property type="organism name" value="rat"/>
</dbReference>
<dbReference type="AGR" id="RGD:1565986"/>
<dbReference type="CTD" id="216049"/>
<dbReference type="RGD" id="1565986">
    <property type="gene designation" value="Zfp365"/>
</dbReference>
<dbReference type="VEuPathDB" id="HostDB:ENSRNOG00000000638"/>
<dbReference type="eggNOG" id="ENOG502QT88">
    <property type="taxonomic scope" value="Eukaryota"/>
</dbReference>
<dbReference type="HOGENOM" id="CLU_049609_0_0_1"/>
<dbReference type="InParanoid" id="Q5PQS2"/>
<dbReference type="OrthoDB" id="271433at2759"/>
<dbReference type="PhylomeDB" id="Q5PQS2"/>
<dbReference type="PRO" id="PR:Q5PQS2"/>
<dbReference type="Proteomes" id="UP000002494">
    <property type="component" value="Chromosome 20"/>
</dbReference>
<dbReference type="Bgee" id="ENSRNOG00000000638">
    <property type="expression patterns" value="Expressed in frontal cortex and 17 other cell types or tissues"/>
</dbReference>
<dbReference type="GO" id="GO:0005813">
    <property type="term" value="C:centrosome"/>
    <property type="evidence" value="ECO:0007669"/>
    <property type="project" value="UniProtKB-SubCell"/>
</dbReference>
<dbReference type="GO" id="GO:0005737">
    <property type="term" value="C:cytoplasm"/>
    <property type="evidence" value="ECO:0007669"/>
    <property type="project" value="UniProtKB-KW"/>
</dbReference>
<dbReference type="GO" id="GO:0008270">
    <property type="term" value="F:zinc ion binding"/>
    <property type="evidence" value="ECO:0007669"/>
    <property type="project" value="UniProtKB-KW"/>
</dbReference>
<dbReference type="GO" id="GO:0021687">
    <property type="term" value="P:cerebellar molecular layer morphogenesis"/>
    <property type="evidence" value="ECO:0000250"/>
    <property type="project" value="UniProtKB"/>
</dbReference>
<dbReference type="GO" id="GO:0140059">
    <property type="term" value="P:dendrite arborization"/>
    <property type="evidence" value="ECO:0000250"/>
    <property type="project" value="UniProtKB"/>
</dbReference>
<dbReference type="GO" id="GO:0060997">
    <property type="term" value="P:dendritic spine morphogenesis"/>
    <property type="evidence" value="ECO:0000250"/>
    <property type="project" value="UniProtKB"/>
</dbReference>
<dbReference type="GO" id="GO:0010977">
    <property type="term" value="P:negative regulation of neuron projection development"/>
    <property type="evidence" value="ECO:0000250"/>
    <property type="project" value="UniProtKB"/>
</dbReference>
<dbReference type="GO" id="GO:0048714">
    <property type="term" value="P:positive regulation of oligodendrocyte differentiation"/>
    <property type="evidence" value="ECO:0000315"/>
    <property type="project" value="UniProtKB"/>
</dbReference>
<dbReference type="GO" id="GO:0110026">
    <property type="term" value="P:regulation of DNA strand resection involved in replication fork processing"/>
    <property type="evidence" value="ECO:0000250"/>
    <property type="project" value="UniProtKB"/>
</dbReference>
<dbReference type="GO" id="GO:0010569">
    <property type="term" value="P:regulation of double-strand break repair via homologous recombination"/>
    <property type="evidence" value="ECO:0000250"/>
    <property type="project" value="UniProtKB"/>
</dbReference>
<dbReference type="GO" id="GO:0010975">
    <property type="term" value="P:regulation of neuron projection development"/>
    <property type="evidence" value="ECO:0000318"/>
    <property type="project" value="GO_Central"/>
</dbReference>
<dbReference type="GO" id="GO:0000723">
    <property type="term" value="P:telomere maintenance"/>
    <property type="evidence" value="ECO:0000250"/>
    <property type="project" value="UniProtKB"/>
</dbReference>
<dbReference type="InterPro" id="IPR057038">
    <property type="entry name" value="FBX41/ZN365_Znf-C2H2"/>
</dbReference>
<dbReference type="InterPro" id="IPR052283">
    <property type="entry name" value="GenomicStab_NeuMorph_Reg"/>
</dbReference>
<dbReference type="PANTHER" id="PTHR15739:SF2">
    <property type="entry name" value="PROTEIN ZNF365"/>
    <property type="match status" value="1"/>
</dbReference>
<dbReference type="PANTHER" id="PTHR15739">
    <property type="entry name" value="ZINC FINGER PROTEIN"/>
    <property type="match status" value="1"/>
</dbReference>
<dbReference type="Pfam" id="PF23165">
    <property type="entry name" value="zf-C2H2_FBX41"/>
    <property type="match status" value="1"/>
</dbReference>
<sequence length="408" mass="46968">MQQTTFEESRYRWQDSLENVAVCLPFRCPRCGDHTRFRSLSSLRAHLEFSHSYEERTLLTKCSLLPSLKDTDLLRSSELPKQGKLLRGHAKVTKQKPSYVNLYSISHGHSKDPKPFEMVAERPVSYVQTYTAVDIRADSLDAPRSSSGLPTQDTKAAFEAHVREKFNRMVEAVDRTIEKRIDKLTKELAQKTAELLEVRAAFVQLTQKKQEVQRRERALHKQVDVAVEMIAVLKQRLTESEEELLRKEEEVVTFNHFLEAAAEKEVQGKARLQDFIENLLQRVELAEKQLEYYQSQQASGFSHDTSEHMLTDISSSRKSRCLSRGHQHSVCNHPELKAHFHLKGRSYLKKAKDERAGMQPAKAIHEQAESPREFFRPAKKGEHLGLSRKGNFRPKMAKKKPTAIVNII</sequence>
<comment type="function">
    <text evidence="1 2 6">Involved in the positive regulation of oligodendrocyte differentiation during postnatal growth (PubMed:24481677). Involved in the morphogenesis of basket cells in the somatosensory cortex during embryogenesis. Involved in dendritic arborization, morphogenesis of spine density dendrite, and establishment of postsynaptic dendrite density in cortical pyramidal neurons (By similarity). Involved in the regulation of neurogenesis. Negatively regulates neurite outgrowth. Involved in homologous recombination (HR) repair pathway. Required for proper resolution of DNA double-strand breaks (DSBs) by HR. Is required for recovery of stalled replication forks, and directly contributes to genomic stability. Interacts with PARP1 and mediates MRE11-dependent DNA end resection during replication fork recovery. Contributes to genomic stability by preventing telomere dysfunction (By similarity).</text>
</comment>
<comment type="subunit">
    <text evidence="1 5">Homodimers. Interacts with NDE1 and NDEL1 (By similarity). Interacts with DISC1 (PubMed:17389905). Interacts with PARP1 (By similarity). Interacts with MCRS1 (By similarity).</text>
</comment>
<comment type="subcellular location">
    <subcellularLocation>
        <location evidence="1">Cytoplasm</location>
        <location evidence="1">Cytoskeleton</location>
        <location evidence="1">Microtubule organizing center</location>
        <location evidence="1">Centrosome</location>
    </subcellularLocation>
</comment>
<comment type="tissue specificity">
    <text evidence="5">Expressed in cerebral cortex, hippocampus, olfactory tubercle and striatum.</text>
</comment>
<gene>
    <name type="primary">Znf365</name>
    <name evidence="7" type="synonym">DBZ</name>
    <name type="synonym">Zfp365</name>
</gene>
<proteinExistence type="evidence at protein level"/>
<accession>Q5PQS2</accession>
<protein>
    <recommendedName>
        <fullName>Protein ZNF365</fullName>
    </recommendedName>
    <alternativeName>
        <fullName evidence="7">DISC1-binding zinc-finger protein</fullName>
    </alternativeName>
</protein>
<keyword id="KW-0175">Coiled coil</keyword>
<keyword id="KW-0963">Cytoplasm</keyword>
<keyword id="KW-0206">Cytoskeleton</keyword>
<keyword id="KW-0479">Metal-binding</keyword>
<keyword id="KW-0524">Neurogenesis</keyword>
<keyword id="KW-0597">Phosphoprotein</keyword>
<keyword id="KW-1185">Reference proteome</keyword>
<keyword id="KW-0862">Zinc</keyword>
<keyword id="KW-0863">Zinc-finger</keyword>
<feature type="chain" id="PRO_0000076377" description="Protein ZNF365">
    <location>
        <begin position="1"/>
        <end position="408"/>
    </location>
</feature>
<feature type="zinc finger region" description="C2H2-type; degenerate" evidence="4">
    <location>
        <begin position="26"/>
        <end position="51"/>
    </location>
</feature>
<feature type="coiled-coil region" evidence="3">
    <location>
        <begin position="170"/>
        <end position="298"/>
    </location>
</feature>
<feature type="modified residue" description="Phosphoserine" evidence="2">
    <location>
        <position position="16"/>
    </location>
</feature>
<feature type="modified residue" description="Phosphoserine" evidence="2">
    <location>
        <position position="139"/>
    </location>
</feature>
<feature type="modified residue" description="Phosphoserine" evidence="2">
    <location>
        <position position="146"/>
    </location>
</feature>
<feature type="modified residue" description="Phosphothreonine" evidence="8">
    <location>
        <position position="176"/>
    </location>
</feature>
<feature type="modified residue" description="Phosphoserine" evidence="8">
    <location>
        <position position="370"/>
    </location>
</feature>
<organism>
    <name type="scientific">Rattus norvegicus</name>
    <name type="common">Rat</name>
    <dbReference type="NCBI Taxonomy" id="10116"/>
    <lineage>
        <taxon>Eukaryota</taxon>
        <taxon>Metazoa</taxon>
        <taxon>Chordata</taxon>
        <taxon>Craniata</taxon>
        <taxon>Vertebrata</taxon>
        <taxon>Euteleostomi</taxon>
        <taxon>Mammalia</taxon>
        <taxon>Eutheria</taxon>
        <taxon>Euarchontoglires</taxon>
        <taxon>Glires</taxon>
        <taxon>Rodentia</taxon>
        <taxon>Myomorpha</taxon>
        <taxon>Muroidea</taxon>
        <taxon>Muridae</taxon>
        <taxon>Murinae</taxon>
        <taxon>Rattus</taxon>
    </lineage>
</organism>
<name>ZN365_RAT</name>
<reference key="1">
    <citation type="journal article" date="2004" name="Genome Res.">
        <title>The status, quality, and expansion of the NIH full-length cDNA project: the Mammalian Gene Collection (MGC).</title>
        <authorList>
            <consortium name="The MGC Project Team"/>
        </authorList>
    </citation>
    <scope>NUCLEOTIDE SEQUENCE [LARGE SCALE MRNA]</scope>
    <source>
        <tissue>Lung</tissue>
    </source>
</reference>
<reference key="2">
    <citation type="journal article" date="2007" name="Mol. Psychiatry">
        <title>A novel DISC1-interacting partner DISC1-binding zinc-finger protein: implication in the modulation of DISC1-dependent neurite outgrowth.</title>
        <authorList>
            <person name="Hattori T."/>
            <person name="Baba K."/>
            <person name="Matsuzaki S."/>
            <person name="Honda A."/>
            <person name="Miyoshi K."/>
            <person name="Inoue K."/>
            <person name="Taniguchi M."/>
            <person name="Hashimoto H."/>
            <person name="Shintani N."/>
            <person name="Baba A."/>
            <person name="Shimizu S."/>
            <person name="Yukioka F."/>
            <person name="Kumamoto N."/>
            <person name="Yamaguchi A."/>
            <person name="Tohyama M."/>
            <person name="Katayama T."/>
        </authorList>
    </citation>
    <scope>INTERACTION WITH DISC1</scope>
    <scope>TISSUE SPECIFICITY</scope>
</reference>
<reference key="3">
    <citation type="journal article" date="2012" name="Nat. Commun.">
        <title>Quantitative maps of protein phosphorylation sites across 14 different rat organs and tissues.</title>
        <authorList>
            <person name="Lundby A."/>
            <person name="Secher A."/>
            <person name="Lage K."/>
            <person name="Nordsborg N.B."/>
            <person name="Dmytriyev A."/>
            <person name="Lundby C."/>
            <person name="Olsen J.V."/>
        </authorList>
    </citation>
    <scope>PHOSPHORYLATION [LARGE SCALE ANALYSIS] AT THR-176 AND SER-370</scope>
    <scope>IDENTIFICATION BY MASS SPECTROMETRY [LARGE SCALE ANALYSIS]</scope>
</reference>
<reference key="4">
    <citation type="journal article" date="2014" name="Glia">
        <title>DBZ, a CNS-specific DISC1 binding protein, positively regulates oligodendrocyte differentiation.</title>
        <authorList>
            <person name="Shimizu S."/>
            <person name="Koyama Y."/>
            <person name="Hattori T."/>
            <person name="Tachibana T."/>
            <person name="Yoshimi T."/>
            <person name="Emoto H."/>
            <person name="Matsumoto Y."/>
            <person name="Miyata S."/>
            <person name="Katayama T."/>
            <person name="Ito A."/>
            <person name="Tohyama M."/>
        </authorList>
    </citation>
    <scope>FUNCTION</scope>
</reference>